<protein>
    <recommendedName>
        <fullName>Glycerol-3-phosphate dehydrogenase [NAD(+)], cytoplasmic</fullName>
        <shortName>GPD-C</shortName>
        <shortName>GPDH-C</shortName>
        <ecNumber evidence="4">1.1.1.8</ecNumber>
    </recommendedName>
</protein>
<organism>
    <name type="scientific">Oryctolagus cuniculus</name>
    <name type="common">Rabbit</name>
    <dbReference type="NCBI Taxonomy" id="9986"/>
    <lineage>
        <taxon>Eukaryota</taxon>
        <taxon>Metazoa</taxon>
        <taxon>Chordata</taxon>
        <taxon>Craniata</taxon>
        <taxon>Vertebrata</taxon>
        <taxon>Euteleostomi</taxon>
        <taxon>Mammalia</taxon>
        <taxon>Eutheria</taxon>
        <taxon>Euarchontoglires</taxon>
        <taxon>Glires</taxon>
        <taxon>Lagomorpha</taxon>
        <taxon>Leporidae</taxon>
        <taxon>Oryctolagus</taxon>
    </lineage>
</organism>
<feature type="chain" id="PRO_0000138081" description="Glycerol-3-phosphate dehydrogenase [NAD(+)], cytoplasmic">
    <location>
        <begin position="1"/>
        <end position="349"/>
    </location>
</feature>
<feature type="active site" description="Proton acceptor" evidence="1">
    <location>
        <position position="204"/>
    </location>
</feature>
<feature type="binding site" evidence="4">
    <location>
        <begin position="10"/>
        <end position="15"/>
    </location>
    <ligand>
        <name>NAD(+)</name>
        <dbReference type="ChEBI" id="CHEBI:57540"/>
    </ligand>
</feature>
<feature type="binding site" evidence="1">
    <location>
        <position position="120"/>
    </location>
    <ligand>
        <name>NAD(+)</name>
        <dbReference type="ChEBI" id="CHEBI:57540"/>
    </ligand>
</feature>
<feature type="binding site" evidence="1">
    <location>
        <position position="120"/>
    </location>
    <ligand>
        <name>substrate</name>
    </ligand>
</feature>
<feature type="binding site" evidence="4">
    <location>
        <position position="153"/>
    </location>
    <ligand>
        <name>NAD(+)</name>
        <dbReference type="ChEBI" id="CHEBI:57540"/>
    </ligand>
</feature>
<feature type="binding site" evidence="1">
    <location>
        <begin position="269"/>
        <end position="270"/>
    </location>
    <ligand>
        <name>substrate</name>
    </ligand>
</feature>
<feature type="binding site" evidence="4">
    <location>
        <position position="269"/>
    </location>
    <ligand>
        <name>NAD(+)</name>
        <dbReference type="ChEBI" id="CHEBI:57540"/>
    </ligand>
</feature>
<feature type="binding site" evidence="4">
    <location>
        <position position="296"/>
    </location>
    <ligand>
        <name>NAD(+)</name>
        <dbReference type="ChEBI" id="CHEBI:57540"/>
    </ligand>
</feature>
<feature type="binding site" evidence="4">
    <location>
        <position position="298"/>
    </location>
    <ligand>
        <name>NAD(+)</name>
        <dbReference type="ChEBI" id="CHEBI:57540"/>
    </ligand>
</feature>
<feature type="modified residue" description="Phosphoserine" evidence="4">
    <location>
        <position position="154"/>
    </location>
</feature>
<feature type="modified residue" description="N6-succinyllysine" evidence="3">
    <location>
        <position position="289"/>
    </location>
</feature>
<feature type="modified residue" description="Phosphotyrosine" evidence="2">
    <location>
        <position position="326"/>
    </location>
</feature>
<reference key="1">
    <citation type="journal article" date="1980" name="Eur. J. Biochem.">
        <title>Prediction of secondary structural elements in glycerol-3-phosphate dehydrogenase by comparison with other dehydrogenases.</title>
        <authorList>
            <person name="Otto J."/>
            <person name="Argos P."/>
            <person name="Rossmann M.G."/>
        </authorList>
    </citation>
    <scope>SECONDARY STRUCTURE PREDICTION</scope>
</reference>
<comment type="function">
    <text evidence="4">Has glycerol-3-phosphate dehydrogenase activity.</text>
</comment>
<comment type="catalytic activity">
    <reaction evidence="4">
        <text>sn-glycerol 3-phosphate + NAD(+) = dihydroxyacetone phosphate + NADH + H(+)</text>
        <dbReference type="Rhea" id="RHEA:11092"/>
        <dbReference type="ChEBI" id="CHEBI:15378"/>
        <dbReference type="ChEBI" id="CHEBI:57540"/>
        <dbReference type="ChEBI" id="CHEBI:57597"/>
        <dbReference type="ChEBI" id="CHEBI:57642"/>
        <dbReference type="ChEBI" id="CHEBI:57945"/>
        <dbReference type="EC" id="1.1.1.8"/>
    </reaction>
    <physiologicalReaction direction="left-to-right" evidence="4">
        <dbReference type="Rhea" id="RHEA:11093"/>
    </physiologicalReaction>
</comment>
<comment type="subunit">
    <text>Homodimer.</text>
</comment>
<comment type="subcellular location">
    <subcellularLocation>
        <location evidence="4">Cytoplasm</location>
    </subcellularLocation>
</comment>
<comment type="similarity">
    <text evidence="5">Belongs to the NAD-dependent glycerol-3-phosphate dehydrogenase family.</text>
</comment>
<gene>
    <name type="primary">GPD1</name>
</gene>
<sequence length="349" mass="37610">MAGKKVCIVGSGDWGSAIAKIVGGNAAQLAQFDPRVTMWVFEEDIGGKKLTEIINTHQENVKYLPGHKLPPNVVAVPDVVKAAADADILIFVVPHQFIGKICDEIKGHLKANAIGISLIKGVNEGPKGLKLISEVIGEHLGIPMSVLMGANIASEVADEKFCETTIGCKDQAQGQLLKQLMQTPNFRIVVTQEVNTVEICGALKDLVAVGAGFCDGIGFGDNTKAAVIRLGLMEMIAFAKLFCSGPVSPATFLESCGVADLITTCYGGRNRKVAEAFARTGKSIEQLEKEMLNGQKLQGPETARELHSILQHKGLVDWFPLFMAVYKVCYQGQPVGEFIRCLQNHPEHM</sequence>
<name>GPDA_RABIT</name>
<proteinExistence type="inferred from homology"/>
<dbReference type="EC" id="1.1.1.8" evidence="4"/>
<dbReference type="PIR" id="A32512">
    <property type="entry name" value="A32512"/>
</dbReference>
<dbReference type="SMR" id="P08507"/>
<dbReference type="FunCoup" id="P08507">
    <property type="interactions" value="421"/>
</dbReference>
<dbReference type="STRING" id="9986.ENSOCUP00000008696"/>
<dbReference type="InParanoid" id="P08507"/>
<dbReference type="BRENDA" id="1.1.1.8">
    <property type="organism ID" value="1749"/>
</dbReference>
<dbReference type="SABIO-RK" id="P08507"/>
<dbReference type="Proteomes" id="UP000001811">
    <property type="component" value="Unplaced"/>
</dbReference>
<dbReference type="GO" id="GO:0005829">
    <property type="term" value="C:cytosol"/>
    <property type="evidence" value="ECO:0007669"/>
    <property type="project" value="TreeGrafter"/>
</dbReference>
<dbReference type="GO" id="GO:0141152">
    <property type="term" value="F:glycerol-3-phosphate dehydrogenase (NAD+) activity"/>
    <property type="evidence" value="ECO:0007669"/>
    <property type="project" value="UniProtKB-EC"/>
</dbReference>
<dbReference type="GO" id="GO:0051287">
    <property type="term" value="F:NAD binding"/>
    <property type="evidence" value="ECO:0007669"/>
    <property type="project" value="InterPro"/>
</dbReference>
<dbReference type="GO" id="GO:0042803">
    <property type="term" value="F:protein homodimerization activity"/>
    <property type="evidence" value="ECO:0007669"/>
    <property type="project" value="InterPro"/>
</dbReference>
<dbReference type="GO" id="GO:0005975">
    <property type="term" value="P:carbohydrate metabolic process"/>
    <property type="evidence" value="ECO:0007669"/>
    <property type="project" value="InterPro"/>
</dbReference>
<dbReference type="GO" id="GO:0046168">
    <property type="term" value="P:glycerol-3-phosphate catabolic process"/>
    <property type="evidence" value="ECO:0007669"/>
    <property type="project" value="InterPro"/>
</dbReference>
<dbReference type="FunFam" id="3.40.50.720:FF:000088">
    <property type="entry name" value="Glycerol-3-phosphate dehydrogenase [NAD(+)]"/>
    <property type="match status" value="1"/>
</dbReference>
<dbReference type="FunFam" id="1.10.1040.10:FF:000084">
    <property type="entry name" value="Glycerol-3-phosphate dehydrogenase [NAD(+)], cytoplasmic"/>
    <property type="match status" value="1"/>
</dbReference>
<dbReference type="Gene3D" id="1.10.1040.10">
    <property type="entry name" value="N-(1-d-carboxylethyl)-l-norvaline Dehydrogenase, domain 2"/>
    <property type="match status" value="1"/>
</dbReference>
<dbReference type="Gene3D" id="3.40.50.720">
    <property type="entry name" value="NAD(P)-binding Rossmann-like Domain"/>
    <property type="match status" value="1"/>
</dbReference>
<dbReference type="InterPro" id="IPR008927">
    <property type="entry name" value="6-PGluconate_DH-like_C_sf"/>
</dbReference>
<dbReference type="InterPro" id="IPR013328">
    <property type="entry name" value="6PGD_dom2"/>
</dbReference>
<dbReference type="InterPro" id="IPR006168">
    <property type="entry name" value="G3P_DH_NAD-dep"/>
</dbReference>
<dbReference type="InterPro" id="IPR006109">
    <property type="entry name" value="G3P_DH_NAD-dep_C"/>
</dbReference>
<dbReference type="InterPro" id="IPR017751">
    <property type="entry name" value="G3P_DH_NAD-dep_euk"/>
</dbReference>
<dbReference type="InterPro" id="IPR011128">
    <property type="entry name" value="G3P_DH_NAD-dep_N"/>
</dbReference>
<dbReference type="InterPro" id="IPR036291">
    <property type="entry name" value="NAD(P)-bd_dom_sf"/>
</dbReference>
<dbReference type="NCBIfam" id="TIGR03376">
    <property type="entry name" value="glycerol3P_DH"/>
    <property type="match status" value="1"/>
</dbReference>
<dbReference type="PANTHER" id="PTHR11728">
    <property type="entry name" value="GLYCEROL-3-PHOSPHATE DEHYDROGENASE"/>
    <property type="match status" value="1"/>
</dbReference>
<dbReference type="PANTHER" id="PTHR11728:SF32">
    <property type="entry name" value="GLYCEROL-3-PHOSPHATE DEHYDROGENASE [NAD(+)], CYTOPLASMIC"/>
    <property type="match status" value="1"/>
</dbReference>
<dbReference type="Pfam" id="PF07479">
    <property type="entry name" value="NAD_Gly3P_dh_C"/>
    <property type="match status" value="1"/>
</dbReference>
<dbReference type="Pfam" id="PF01210">
    <property type="entry name" value="NAD_Gly3P_dh_N"/>
    <property type="match status" value="1"/>
</dbReference>
<dbReference type="PIRSF" id="PIRSF000114">
    <property type="entry name" value="Glycerol-3-P_dh"/>
    <property type="match status" value="1"/>
</dbReference>
<dbReference type="PRINTS" id="PR00077">
    <property type="entry name" value="GPDHDRGNASE"/>
</dbReference>
<dbReference type="SUPFAM" id="SSF48179">
    <property type="entry name" value="6-phosphogluconate dehydrogenase C-terminal domain-like"/>
    <property type="match status" value="1"/>
</dbReference>
<dbReference type="SUPFAM" id="SSF51735">
    <property type="entry name" value="NAD(P)-binding Rossmann-fold domains"/>
    <property type="match status" value="1"/>
</dbReference>
<dbReference type="PROSITE" id="PS00957">
    <property type="entry name" value="NAD_G3PDH"/>
    <property type="match status" value="1"/>
</dbReference>
<accession>P08507</accession>
<evidence type="ECO:0000250" key="1"/>
<evidence type="ECO:0000250" key="2">
    <source>
        <dbReference type="UniProtKB" id="O35077"/>
    </source>
</evidence>
<evidence type="ECO:0000250" key="3">
    <source>
        <dbReference type="UniProtKB" id="P13707"/>
    </source>
</evidence>
<evidence type="ECO:0000250" key="4">
    <source>
        <dbReference type="UniProtKB" id="P21695"/>
    </source>
</evidence>
<evidence type="ECO:0000305" key="5"/>
<keyword id="KW-0963">Cytoplasm</keyword>
<keyword id="KW-0520">NAD</keyword>
<keyword id="KW-0560">Oxidoreductase</keyword>
<keyword id="KW-0597">Phosphoprotein</keyword>
<keyword id="KW-1185">Reference proteome</keyword>